<accession>W6QIM3</accession>
<feature type="signal peptide" evidence="3">
    <location>
        <begin position="1"/>
        <end position="20"/>
    </location>
</feature>
<feature type="chain" id="PRO_0000444540" description="Chanoclavine-I dehydrogenase ifgE">
    <location>
        <begin position="21"/>
        <end position="261"/>
    </location>
</feature>
<feature type="active site" description="Proton acceptor" evidence="4">
    <location>
        <position position="166"/>
    </location>
</feature>
<feature type="active site" description="Lowers pKa of active site Tyr" evidence="2">
    <location>
        <position position="170"/>
    </location>
</feature>
<feature type="binding site" evidence="1">
    <location>
        <position position="18"/>
    </location>
    <ligand>
        <name>NADP(+)</name>
        <dbReference type="ChEBI" id="CHEBI:58349"/>
    </ligand>
</feature>
<feature type="binding site" evidence="1">
    <location>
        <position position="48"/>
    </location>
    <ligand>
        <name>NADP(+)</name>
        <dbReference type="ChEBI" id="CHEBI:58349"/>
    </ligand>
</feature>
<feature type="binding site" evidence="1">
    <location>
        <position position="66"/>
    </location>
    <ligand>
        <name>NADP(+)</name>
        <dbReference type="ChEBI" id="CHEBI:58349"/>
    </ligand>
</feature>
<feature type="binding site" evidence="1">
    <location>
        <position position="132"/>
    </location>
    <ligand>
        <name>NADP(+)</name>
        <dbReference type="ChEBI" id="CHEBI:58349"/>
    </ligand>
</feature>
<feature type="binding site" evidence="2">
    <location>
        <position position="166"/>
    </location>
    <ligand>
        <name>NADP(+)</name>
        <dbReference type="ChEBI" id="CHEBI:58349"/>
    </ligand>
</feature>
<feature type="binding site" evidence="2">
    <location>
        <position position="170"/>
    </location>
    <ligand>
        <name>NADP(+)</name>
        <dbReference type="ChEBI" id="CHEBI:58349"/>
    </ligand>
</feature>
<feature type="binding site" evidence="1">
    <location>
        <position position="201"/>
    </location>
    <ligand>
        <name>NADP(+)</name>
        <dbReference type="ChEBI" id="CHEBI:58349"/>
    </ligand>
</feature>
<comment type="function">
    <text evidence="5 6">Chanoclavine-I dehydrogenase; part of the gene cluster that mediates the biosynthesis of isofumigaclavines, fungal ergot alkaloids (PubMed:28620689, PubMed:28902217). The tryptophan dimethylallyltransferase ifgA catalyzes the first step of ergot alkaloid biosynthesis by condensing dimethylallyl diphosphate (DMAP) and tryptophan to form 4-dimethylallyl-L-tryptophan (PubMed:28620689). The second step is catalyzed by the methyltransferase ifgB that methylates 4-dimethylallyl-L-tryptophan in the presence of S-adenosyl-L-methionine, resulting in the formation of N-methyl-dimethylallyl-L-tryptophan (PubMed:28620689). The catalase ifgD and the FAD-dependent oxidoreductase ifgC then transform N-methyl-dimethylallyl-L-tryptophan to chanoclavine-I which is further oxidized by ifgE in the presence of NAD(+), resulting in the formation of chanoclavine-I aldehyde (PubMed:28902217). The chanoclavine-I aldehyde reductases ifgG and/or fgaOx3 reduce chanoclavine-I aldehyde to dihydrochanoclavine-I aldehyde that spontaneously dehydrates to form 6,8-dimethyl-6,7-didehydroergoline (PubMed:28620689, PubMed:28902217). The festuclavine dehydrogenases ifgF1 and/or ifgF2 then catalyze the reduction of 6,8-dimethyl-6,7-didehydroergoline to form festuclavine (PubMed:28620689). Hydrolysis of festuclavine by a yet undetermined cytochrome P450 monooxygenase (called ifgH) then leads to the formation of isofumigaclavine B which is in turn acetylated by ifgI to isofumigaclavine A (PubMed:28620689). Penicillium roqueforti has interestingly at least two sets of genes for the consumption of chanoclavine-I aldehyde on three different loci, the OYEs ifgG/fgaOx3 and the festuclavine synthase homologs ifgF1/ifgF2 (PubMed:28620689, PubMed:28902217). The reason for the duplication of these genes is unclear, probably to ensure the conversion of chanoclavine-I aldehyde by differential gene expression under various environmental conditions (PubMed:28902217).</text>
</comment>
<comment type="biophysicochemical properties">
    <kinetics>
        <KM evidence="6">573 uM for chanoclavine-I (in absence of chanoclavine-I aldehyde reductase fgaOx3)</KM>
        <KM evidence="6">168 uM for chanoclavine-I (in presence of chanoclavine-I aldehyde reductase fgaOx3)</KM>
        <KM evidence="6">82 uM for NAD(+) (in absence of chanoclavine-I aldehyde reductase fgaOx3)</KM>
        <KM evidence="6">154 uM for NAD(+) (in presence of chanoclavine-I aldehyde reductase fgaOx3)</KM>
    </kinetics>
</comment>
<comment type="pathway">
    <text evidence="6">Alkaloid biosynthesis; ergot alkaloid biosynthesis.</text>
</comment>
<comment type="similarity">
    <text evidence="9">Belongs to the short-chain dehydrogenases/reductases (SDR) family.</text>
</comment>
<proteinExistence type="evidence at protein level"/>
<dbReference type="EC" id="1.1.1.-" evidence="6"/>
<dbReference type="EMBL" id="HG792019">
    <property type="protein sequence ID" value="CDM36673.1"/>
    <property type="molecule type" value="Genomic_DNA"/>
</dbReference>
<dbReference type="SMR" id="W6QIM3"/>
<dbReference type="STRING" id="1365484.W6QIM3"/>
<dbReference type="OMA" id="MATHYGI"/>
<dbReference type="OrthoDB" id="1669814at2759"/>
<dbReference type="UniPathway" id="UPA00327"/>
<dbReference type="Proteomes" id="UP000030686">
    <property type="component" value="Unassembled WGS sequence"/>
</dbReference>
<dbReference type="GO" id="GO:0016491">
    <property type="term" value="F:oxidoreductase activity"/>
    <property type="evidence" value="ECO:0007669"/>
    <property type="project" value="UniProtKB-KW"/>
</dbReference>
<dbReference type="GO" id="GO:0035835">
    <property type="term" value="P:indole alkaloid biosynthetic process"/>
    <property type="evidence" value="ECO:0007669"/>
    <property type="project" value="UniProtKB-UniPathway"/>
</dbReference>
<dbReference type="CDD" id="cd05233">
    <property type="entry name" value="SDR_c"/>
    <property type="match status" value="1"/>
</dbReference>
<dbReference type="FunFam" id="3.40.50.720:FF:000979">
    <property type="entry name" value="Chanoclavine-I dehydrogenase easD"/>
    <property type="match status" value="1"/>
</dbReference>
<dbReference type="Gene3D" id="3.40.50.720">
    <property type="entry name" value="NAD(P)-binding Rossmann-like Domain"/>
    <property type="match status" value="1"/>
</dbReference>
<dbReference type="InterPro" id="IPR036291">
    <property type="entry name" value="NAD(P)-bd_dom_sf"/>
</dbReference>
<dbReference type="InterPro" id="IPR020904">
    <property type="entry name" value="Sc_DH/Rdtase_CS"/>
</dbReference>
<dbReference type="InterPro" id="IPR002347">
    <property type="entry name" value="SDR_fam"/>
</dbReference>
<dbReference type="PANTHER" id="PTHR24321">
    <property type="entry name" value="DEHYDROGENASES, SHORT CHAIN"/>
    <property type="match status" value="1"/>
</dbReference>
<dbReference type="PANTHER" id="PTHR24321:SF8">
    <property type="entry name" value="ESTRADIOL 17-BETA-DEHYDROGENASE 8-RELATED"/>
    <property type="match status" value="1"/>
</dbReference>
<dbReference type="Pfam" id="PF13561">
    <property type="entry name" value="adh_short_C2"/>
    <property type="match status" value="1"/>
</dbReference>
<dbReference type="PRINTS" id="PR00081">
    <property type="entry name" value="GDHRDH"/>
</dbReference>
<dbReference type="SUPFAM" id="SSF51735">
    <property type="entry name" value="NAD(P)-binding Rossmann-fold domains"/>
    <property type="match status" value="1"/>
</dbReference>
<dbReference type="PROSITE" id="PS00061">
    <property type="entry name" value="ADH_SHORT"/>
    <property type="match status" value="1"/>
</dbReference>
<evidence type="ECO:0000250" key="1">
    <source>
        <dbReference type="UniProtKB" id="L0E2Z4"/>
    </source>
</evidence>
<evidence type="ECO:0000250" key="2">
    <source>
        <dbReference type="UniProtKB" id="O93868"/>
    </source>
</evidence>
<evidence type="ECO:0000255" key="3"/>
<evidence type="ECO:0000255" key="4">
    <source>
        <dbReference type="PROSITE-ProRule" id="PRU10001"/>
    </source>
</evidence>
<evidence type="ECO:0000269" key="5">
    <source>
    </source>
</evidence>
<evidence type="ECO:0000269" key="6">
    <source>
    </source>
</evidence>
<evidence type="ECO:0000303" key="7">
    <source>
    </source>
</evidence>
<evidence type="ECO:0000303" key="8">
    <source>
    </source>
</evidence>
<evidence type="ECO:0000305" key="9"/>
<protein>
    <recommendedName>
        <fullName evidence="7">Chanoclavine-I dehydrogenase ifgE</fullName>
        <ecNumber evidence="6">1.1.1.-</ecNumber>
    </recommendedName>
    <alternativeName>
        <fullName evidence="7">Isofumigaclavine biosynthesis cluster A protein E</fullName>
    </alternativeName>
    <alternativeName>
        <fullName evidence="7">Short-chain dehydrogenase/reductase ifgE</fullName>
    </alternativeName>
</protein>
<gene>
    <name evidence="7" type="primary">ifgE</name>
    <name evidence="8" type="synonym">FgaDH</name>
    <name type="ORF">PROQFM164_S05g000506</name>
</gene>
<organism>
    <name type="scientific">Penicillium roqueforti (strain FM164)</name>
    <dbReference type="NCBI Taxonomy" id="1365484"/>
    <lineage>
        <taxon>Eukaryota</taxon>
        <taxon>Fungi</taxon>
        <taxon>Dikarya</taxon>
        <taxon>Ascomycota</taxon>
        <taxon>Pezizomycotina</taxon>
        <taxon>Eurotiomycetes</taxon>
        <taxon>Eurotiomycetidae</taxon>
        <taxon>Eurotiales</taxon>
        <taxon>Aspergillaceae</taxon>
        <taxon>Penicillium</taxon>
    </lineage>
</organism>
<name>IFGE_PENRF</name>
<keyword id="KW-0017">Alkaloid metabolism</keyword>
<keyword id="KW-0521">NADP</keyword>
<keyword id="KW-0560">Oxidoreductase</keyword>
<keyword id="KW-1185">Reference proteome</keyword>
<keyword id="KW-0732">Signal</keyword>
<sequence>MASVKSRVFAITGGASGIGAATSRLLAERGATAVCVGDISCKNFDELKESMKKINPATEVHCSLLDVTSPTEVEKWVKSIVAKFGNLHGAANIAGIAQGAGLRNSPTILEEGDEEWSKVLKVNLDGVFYCTRAEVRAMKSLPSDDRSIVNVGSIAALSHIPDVYAYGTSKGASTYFTTCVAADTFPFGIRVNSVSPGITDTPLLPQFIPKAKTSDEVKEVYRKEGFSVVKAGDVARTIVWLLSEDSSPVYGANINVGASMP</sequence>
<reference key="1">
    <citation type="journal article" date="2014" name="Nat. Commun.">
        <title>Multiple recent horizontal transfers of a large genomic region in cheese making fungi.</title>
        <authorList>
            <person name="Cheeseman K."/>
            <person name="Ropars J."/>
            <person name="Renault P."/>
            <person name="Dupont J."/>
            <person name="Gouzy J."/>
            <person name="Branca A."/>
            <person name="Abraham A.-L."/>
            <person name="Ceppi M."/>
            <person name="Conseiller E."/>
            <person name="Debuchy R."/>
            <person name="Malagnac F."/>
            <person name="Goarin A."/>
            <person name="Silar P."/>
            <person name="Lacoste S."/>
            <person name="Sallet E."/>
            <person name="Bensimon A."/>
            <person name="Giraud T."/>
            <person name="Brygoo Y."/>
        </authorList>
    </citation>
    <scope>NUCLEOTIDE SEQUENCE [LARGE SCALE GENOMIC DNA]</scope>
    <source>
        <strain>FM164</strain>
    </source>
</reference>
<reference key="2">
    <citation type="journal article" date="2017" name="Appl. Microbiol. Biotechnol.">
        <title>Silencing of a second dimethylallyltryptophan synthase of Penicillium roqueforti reveals a novel clavine alkaloid gene cluster.</title>
        <authorList>
            <person name="Fernandez-Bodega A."/>
            <person name="Alvarez-Alvarez R."/>
            <person name="Liras P."/>
            <person name="Martin J.F."/>
        </authorList>
    </citation>
    <scope>FUNCTION</scope>
</reference>
<reference key="3">
    <citation type="journal article" date="2017" name="Org. Biomol. Chem.">
        <title>A bifunctional old yellow enzyme from Penicillium roqueforti is involved in ergot alkaloid biosynthesis.</title>
        <authorList>
            <person name="Gerhards N."/>
            <person name="Li S.M."/>
        </authorList>
    </citation>
    <scope>FUNCTION</scope>
    <scope>CATALYTIC ACTIVITY</scope>
    <scope>BIOPHYSICOCHEMICAL PROPERTIES</scope>
    <scope>PATHWAY</scope>
</reference>